<name>RHG39_MOUSE</name>
<proteinExistence type="evidence at protein level"/>
<gene>
    <name type="primary">Arhgap39</name>
    <name type="synonym">D15Wsu169e</name>
    <name type="synonym">Kiaa1688</name>
</gene>
<protein>
    <recommendedName>
        <fullName>Rho GTPase-activating protein 39</fullName>
    </recommendedName>
</protein>
<dbReference type="EMBL" id="AK173232">
    <property type="protein sequence ID" value="BAD32510.1"/>
    <property type="status" value="ALT_INIT"/>
    <property type="molecule type" value="mRNA"/>
</dbReference>
<dbReference type="EMBL" id="BC060637">
    <property type="protein sequence ID" value="AAH60637.1"/>
    <property type="molecule type" value="mRNA"/>
</dbReference>
<dbReference type="EMBL" id="AK035479">
    <property type="protein sequence ID" value="BAC29074.1"/>
    <property type="molecule type" value="mRNA"/>
</dbReference>
<dbReference type="CCDS" id="CCDS27592.3">
    <molecule id="P59281-2"/>
</dbReference>
<dbReference type="CCDS" id="CCDS49654.2">
    <molecule id="P59281-1"/>
</dbReference>
<dbReference type="RefSeq" id="NP_001161760.2">
    <molecule id="P59281-1"/>
    <property type="nucleotide sequence ID" value="NM_001168288.2"/>
</dbReference>
<dbReference type="RefSeq" id="NP_940812.3">
    <molecule id="P59281-2"/>
    <property type="nucleotide sequence ID" value="NM_198420.3"/>
</dbReference>
<dbReference type="SMR" id="P59281"/>
<dbReference type="BioGRID" id="230172">
    <property type="interactions" value="14"/>
</dbReference>
<dbReference type="FunCoup" id="P59281">
    <property type="interactions" value="239"/>
</dbReference>
<dbReference type="IntAct" id="P59281">
    <property type="interactions" value="8"/>
</dbReference>
<dbReference type="MINT" id="P59281"/>
<dbReference type="STRING" id="10090.ENSMUSP00000158945"/>
<dbReference type="GlyGen" id="P59281">
    <property type="glycosylation" value="1 site, 1 O-linked glycan (1 site)"/>
</dbReference>
<dbReference type="iPTMnet" id="P59281"/>
<dbReference type="PhosphoSitePlus" id="P59281"/>
<dbReference type="SwissPalm" id="P59281"/>
<dbReference type="PaxDb" id="10090-ENSMUSP00000036697"/>
<dbReference type="ProteomicsDB" id="255265">
    <molecule id="P59281-1"/>
</dbReference>
<dbReference type="ProteomicsDB" id="255266">
    <molecule id="P59281-2"/>
</dbReference>
<dbReference type="Pumba" id="P59281"/>
<dbReference type="Antibodypedia" id="49512">
    <property type="antibodies" value="73 antibodies from 21 providers"/>
</dbReference>
<dbReference type="DNASU" id="223666"/>
<dbReference type="Ensembl" id="ENSMUST00000036176.16">
    <molecule id="P59281-1"/>
    <property type="protein sequence ID" value="ENSMUSP00000036697.10"/>
    <property type="gene ID" value="ENSMUSG00000033697.17"/>
</dbReference>
<dbReference type="Ensembl" id="ENSMUST00000239134.2">
    <molecule id="P59281-2"/>
    <property type="protein sequence ID" value="ENSMUSP00000158984.2"/>
    <property type="gene ID" value="ENSMUSG00000033697.17"/>
</dbReference>
<dbReference type="GeneID" id="223666"/>
<dbReference type="KEGG" id="mmu:223666"/>
<dbReference type="AGR" id="MGI:107858"/>
<dbReference type="CTD" id="80728"/>
<dbReference type="MGI" id="MGI:107858">
    <property type="gene designation" value="Arhgap39"/>
</dbReference>
<dbReference type="VEuPathDB" id="HostDB:ENSMUSG00000033697"/>
<dbReference type="eggNOG" id="ENOG502QR6X">
    <property type="taxonomic scope" value="Eukaryota"/>
</dbReference>
<dbReference type="GeneTree" id="ENSGT00390000003161"/>
<dbReference type="InParanoid" id="P59281"/>
<dbReference type="OrthoDB" id="437889at2759"/>
<dbReference type="PhylomeDB" id="P59281"/>
<dbReference type="Reactome" id="R-MMU-8980692">
    <property type="pathway name" value="RHOA GTPase cycle"/>
</dbReference>
<dbReference type="Reactome" id="R-MMU-9013026">
    <property type="pathway name" value="RHOB GTPase cycle"/>
</dbReference>
<dbReference type="Reactome" id="R-MMU-9013106">
    <property type="pathway name" value="RHOC GTPase cycle"/>
</dbReference>
<dbReference type="Reactome" id="R-MMU-9013148">
    <property type="pathway name" value="CDC42 GTPase cycle"/>
</dbReference>
<dbReference type="Reactome" id="R-MMU-9013149">
    <property type="pathway name" value="RAC1 GTPase cycle"/>
</dbReference>
<dbReference type="Reactome" id="R-MMU-9013404">
    <property type="pathway name" value="RAC2 GTPase cycle"/>
</dbReference>
<dbReference type="Reactome" id="R-MMU-9013405">
    <property type="pathway name" value="RHOD GTPase cycle"/>
</dbReference>
<dbReference type="Reactome" id="R-MMU-9013408">
    <property type="pathway name" value="RHOG GTPase cycle"/>
</dbReference>
<dbReference type="Reactome" id="R-MMU-9013423">
    <property type="pathway name" value="RAC3 GTPase cycle"/>
</dbReference>
<dbReference type="Reactome" id="R-MMU-9035034">
    <property type="pathway name" value="RHOF GTPase cycle"/>
</dbReference>
<dbReference type="BioGRID-ORCS" id="223666">
    <property type="hits" value="4 hits in 79 CRISPR screens"/>
</dbReference>
<dbReference type="CD-CODE" id="CE726F99">
    <property type="entry name" value="Postsynaptic density"/>
</dbReference>
<dbReference type="ChiTaRS" id="Arhgap39">
    <property type="organism name" value="mouse"/>
</dbReference>
<dbReference type="PRO" id="PR:P59281"/>
<dbReference type="Proteomes" id="UP000000589">
    <property type="component" value="Chromosome 15"/>
</dbReference>
<dbReference type="RNAct" id="P59281">
    <property type="molecule type" value="protein"/>
</dbReference>
<dbReference type="Bgee" id="ENSMUSG00000033697">
    <property type="expression patterns" value="Expressed in ear vesicle and 241 other cell types or tissues"/>
</dbReference>
<dbReference type="ExpressionAtlas" id="P59281">
    <property type="expression patterns" value="baseline and differential"/>
</dbReference>
<dbReference type="GO" id="GO:0005856">
    <property type="term" value="C:cytoskeleton"/>
    <property type="evidence" value="ECO:0007669"/>
    <property type="project" value="InterPro"/>
</dbReference>
<dbReference type="GO" id="GO:0005634">
    <property type="term" value="C:nucleus"/>
    <property type="evidence" value="ECO:0007669"/>
    <property type="project" value="UniProtKB-SubCell"/>
</dbReference>
<dbReference type="GO" id="GO:0007165">
    <property type="term" value="P:signal transduction"/>
    <property type="evidence" value="ECO:0007669"/>
    <property type="project" value="InterPro"/>
</dbReference>
<dbReference type="CDD" id="cd04389">
    <property type="entry name" value="RhoGAP_KIAA1688"/>
    <property type="match status" value="1"/>
</dbReference>
<dbReference type="FunFam" id="2.20.70.10:FF:000022">
    <property type="entry name" value="Rho GTPase activating protein 39"/>
    <property type="match status" value="1"/>
</dbReference>
<dbReference type="FunFam" id="1.10.555.10:FF:000011">
    <property type="entry name" value="Rho GTPase-activating protein 39"/>
    <property type="match status" value="1"/>
</dbReference>
<dbReference type="Gene3D" id="2.20.70.10">
    <property type="match status" value="1"/>
</dbReference>
<dbReference type="Gene3D" id="1.25.40.530">
    <property type="entry name" value="MyTH4 domain"/>
    <property type="match status" value="1"/>
</dbReference>
<dbReference type="Gene3D" id="1.10.555.10">
    <property type="entry name" value="Rho GTPase activation protein"/>
    <property type="match status" value="1"/>
</dbReference>
<dbReference type="InterPro" id="IPR000857">
    <property type="entry name" value="MyTH4_dom"/>
</dbReference>
<dbReference type="InterPro" id="IPR038185">
    <property type="entry name" value="MyTH4_dom_sf"/>
</dbReference>
<dbReference type="InterPro" id="IPR008936">
    <property type="entry name" value="Rho_GTPase_activation_prot"/>
</dbReference>
<dbReference type="InterPro" id="IPR000198">
    <property type="entry name" value="RhoGAP_dom"/>
</dbReference>
<dbReference type="InterPro" id="IPR001202">
    <property type="entry name" value="WW_dom"/>
</dbReference>
<dbReference type="InterPro" id="IPR036020">
    <property type="entry name" value="WW_dom_sf"/>
</dbReference>
<dbReference type="PANTHER" id="PTHR45876">
    <property type="entry name" value="FI04035P"/>
    <property type="match status" value="1"/>
</dbReference>
<dbReference type="PANTHER" id="PTHR45876:SF1">
    <property type="entry name" value="RHO GTPASE-ACTIVATING PROTEIN 39"/>
    <property type="match status" value="1"/>
</dbReference>
<dbReference type="Pfam" id="PF00784">
    <property type="entry name" value="MyTH4"/>
    <property type="match status" value="1"/>
</dbReference>
<dbReference type="Pfam" id="PF00620">
    <property type="entry name" value="RhoGAP"/>
    <property type="match status" value="1"/>
</dbReference>
<dbReference type="SMART" id="SM00139">
    <property type="entry name" value="MyTH4"/>
    <property type="match status" value="1"/>
</dbReference>
<dbReference type="SMART" id="SM00324">
    <property type="entry name" value="RhoGAP"/>
    <property type="match status" value="1"/>
</dbReference>
<dbReference type="SMART" id="SM00456">
    <property type="entry name" value="WW"/>
    <property type="match status" value="2"/>
</dbReference>
<dbReference type="SUPFAM" id="SSF48350">
    <property type="entry name" value="GTPase activation domain, GAP"/>
    <property type="match status" value="1"/>
</dbReference>
<dbReference type="SUPFAM" id="SSF51045">
    <property type="entry name" value="WW domain"/>
    <property type="match status" value="1"/>
</dbReference>
<dbReference type="PROSITE" id="PS51016">
    <property type="entry name" value="MYTH4"/>
    <property type="match status" value="1"/>
</dbReference>
<dbReference type="PROSITE" id="PS50238">
    <property type="entry name" value="RHOGAP"/>
    <property type="match status" value="1"/>
</dbReference>
<dbReference type="PROSITE" id="PS50020">
    <property type="entry name" value="WW_DOMAIN_2"/>
    <property type="match status" value="1"/>
</dbReference>
<sequence>MSQAQDYECRSHHVDEQEPRIPGSSTRLEWVEIIEPRTRERMYANLVTGECVWDPPAGVRIKRTSEDQWWELFDPNTSRFYYYSAASQRTVWHRPQNCDIIPLAKLQTLKQNTESPRASADNSPGRGSRDGSTGSSLEPELEERTQELPVRSGRATTLVTSKEDTSSCSPPGVLLEKDYEVYRDYSADGQLLHYRTSSLRWNSGNKERMLIKVADREPSFLTPQGNGYPADNQPGGHHRRPSGSQHSPNLQTFVPDTDGTVFFPERRPSPFLRRAELSGNCSPLLIQPRKPSSDSQPSSPRYGYEPPLYEEPPVEYQAPIYDEPPMDVQFEANSPYQTGSPQRSPGRKPHPFLQTTKQTPTSPCQQLMRTKQKCPERFLSLEYSPVGKEYVRQLVYVEQAGSSPKLRAGPRHKYAPNPGGGTYSLQPSPCLLRDQRLGVRSGDYSTMEGPESRPSQPPTPLPQAQEDAMSWSSQQDTMSSTGYSPGTRKRKNRKPSLCQVPSTSSTDGAGGLLGEQPLTEERSPCRASLTPVKAEADLVRGTPEPFLAQARLAWEAQQAHFHMKQRGSWDSQQDGSGYESDGAVPLPMPGPVVRAFSEDEALAQQDSKHWKRSTFDKLGFPQILLEKSVSVQTNLASPEPHLHPSQSEDLGACAQFESSRQNRSAMPSSSCVFPTFTLRKPSSETDIENWASKHFNKHTQGLFRRKVSIANMLAWSSESIKKPMIVTSDRHVKKEACEIFKLIQMYMGDRRAKADPLHVALEIATKGWSAQGLRDELYIQLCRQTTENFRLESLARGWELMAICLAFFPPTPKFHSYLEGYIYRHMDPVNDTKVTQHIKELLERNSKKKSKLRKKPKPYVEEPDGVAISTYAKYCYHKLQKAALTGAKKGLKKPNVEEIRHAKNAVFSPSMFGSALQEVMSMQKERYPDRQLPWVQTRLSEEVLALNGDQTEGIFRVPGDIDEVNALKLQVDQWKVPTGLEDPHVPASLLKLWYRELEEPLIPHEFYEQCIAHYESPEAAVAVVHALPRINRMVLCYLIRFLQVFVQPANVAITKMDVSNLAMVMAPNCLRCQSDDPRVIFENTRKEMSFLRVLIQHLDTSFMEGVL</sequence>
<feature type="initiator methionine" description="Removed" evidence="1">
    <location>
        <position position="1"/>
    </location>
</feature>
<feature type="chain" id="PRO_0000076093" description="Rho GTPase-activating protein 39">
    <location>
        <begin position="2"/>
        <end position="1107"/>
    </location>
</feature>
<feature type="domain" description="WW 1" evidence="3">
    <location>
        <begin position="25"/>
        <end position="58"/>
    </location>
</feature>
<feature type="domain" description="WW 2" evidence="3">
    <location>
        <begin position="63"/>
        <end position="97"/>
    </location>
</feature>
<feature type="domain" description="MyTH4" evidence="4">
    <location>
        <begin position="715"/>
        <end position="867"/>
    </location>
</feature>
<feature type="domain" description="Rho-GAP" evidence="2">
    <location>
        <begin position="914"/>
        <end position="1102"/>
    </location>
</feature>
<feature type="region of interest" description="Disordered" evidence="5">
    <location>
        <begin position="1"/>
        <end position="21"/>
    </location>
</feature>
<feature type="region of interest" description="Disordered" evidence="5">
    <location>
        <begin position="111"/>
        <end position="173"/>
    </location>
</feature>
<feature type="region of interest" description="Disordered" evidence="5">
    <location>
        <begin position="218"/>
        <end position="267"/>
    </location>
</feature>
<feature type="region of interest" description="Disordered" evidence="5">
    <location>
        <begin position="282"/>
        <end position="311"/>
    </location>
</feature>
<feature type="region of interest" description="Disordered" evidence="5">
    <location>
        <begin position="326"/>
        <end position="370"/>
    </location>
</feature>
<feature type="region of interest" description="Disordered" evidence="5">
    <location>
        <begin position="404"/>
        <end position="429"/>
    </location>
</feature>
<feature type="region of interest" description="Disordered" evidence="5">
    <location>
        <begin position="441"/>
        <end position="529"/>
    </location>
</feature>
<feature type="region of interest" description="Disordered" evidence="5">
    <location>
        <begin position="563"/>
        <end position="585"/>
    </location>
</feature>
<feature type="compositionally biased region" description="Basic and acidic residues" evidence="5">
    <location>
        <begin position="7"/>
        <end position="19"/>
    </location>
</feature>
<feature type="compositionally biased region" description="Polar residues" evidence="5">
    <location>
        <begin position="111"/>
        <end position="122"/>
    </location>
</feature>
<feature type="compositionally biased region" description="Low complexity" evidence="5">
    <location>
        <begin position="123"/>
        <end position="136"/>
    </location>
</feature>
<feature type="compositionally biased region" description="Polar residues" evidence="5">
    <location>
        <begin position="242"/>
        <end position="254"/>
    </location>
</feature>
<feature type="compositionally biased region" description="Polar residues" evidence="5">
    <location>
        <begin position="331"/>
        <end position="343"/>
    </location>
</feature>
<feature type="compositionally biased region" description="Polar residues" evidence="5">
    <location>
        <begin position="353"/>
        <end position="369"/>
    </location>
</feature>
<feature type="compositionally biased region" description="Polar residues" evidence="5">
    <location>
        <begin position="470"/>
        <end position="484"/>
    </location>
</feature>
<feature type="site" description="Arginine finger; crucial for GTP hydrolysis by stabilizing the transition state" evidence="2">
    <location>
        <position position="956"/>
    </location>
</feature>
<feature type="modified residue" description="N-acetylserine" evidence="1">
    <location>
        <position position="2"/>
    </location>
</feature>
<feature type="modified residue" description="Phosphoserine" evidence="1">
    <location>
        <position position="282"/>
    </location>
</feature>
<feature type="modified residue" description="Phosphoserine" evidence="11">
    <location>
        <position position="380"/>
    </location>
</feature>
<feature type="modified residue" description="Phosphoserine" evidence="1">
    <location>
        <position position="384"/>
    </location>
</feature>
<feature type="modified residue" description="Phosphoserine" evidence="1">
    <location>
        <position position="402"/>
    </location>
</feature>
<feature type="modified residue" description="Phosphoserine" evidence="1">
    <location>
        <position position="403"/>
    </location>
</feature>
<feature type="modified residue" description="Phosphoserine" evidence="9 10 11">
    <location>
        <position position="597"/>
    </location>
</feature>
<feature type="modified residue" description="Phosphoserine" evidence="1">
    <location>
        <position position="683"/>
    </location>
</feature>
<feature type="modified residue" description="Phosphoserine" evidence="11">
    <location>
        <position position="708"/>
    </location>
</feature>
<feature type="modified residue" description="Phosphoserine" evidence="11">
    <location>
        <position position="719"/>
    </location>
</feature>
<feature type="splice variant" id="VSP_013707" description="In isoform 2." evidence="6 7">
    <location>
        <begin position="834"/>
        <end position="864"/>
    </location>
</feature>
<feature type="sequence conflict" description="In Ref. 2; AAH60637." evidence="8" ref="2">
    <original>R</original>
    <variation>Q</variation>
    <location>
        <position position="1032"/>
    </location>
</feature>
<accession>P59281</accession>
<accession>Q69ZD4</accession>
<accession>Q6P9R6</accession>
<organism>
    <name type="scientific">Mus musculus</name>
    <name type="common">Mouse</name>
    <dbReference type="NCBI Taxonomy" id="10090"/>
    <lineage>
        <taxon>Eukaryota</taxon>
        <taxon>Metazoa</taxon>
        <taxon>Chordata</taxon>
        <taxon>Craniata</taxon>
        <taxon>Vertebrata</taxon>
        <taxon>Euteleostomi</taxon>
        <taxon>Mammalia</taxon>
        <taxon>Eutheria</taxon>
        <taxon>Euarchontoglires</taxon>
        <taxon>Glires</taxon>
        <taxon>Rodentia</taxon>
        <taxon>Myomorpha</taxon>
        <taxon>Muroidea</taxon>
        <taxon>Muridae</taxon>
        <taxon>Murinae</taxon>
        <taxon>Mus</taxon>
        <taxon>Mus</taxon>
    </lineage>
</organism>
<evidence type="ECO:0000250" key="1">
    <source>
        <dbReference type="UniProtKB" id="Q9C0H5"/>
    </source>
</evidence>
<evidence type="ECO:0000255" key="2">
    <source>
        <dbReference type="PROSITE-ProRule" id="PRU00172"/>
    </source>
</evidence>
<evidence type="ECO:0000255" key="3">
    <source>
        <dbReference type="PROSITE-ProRule" id="PRU00224"/>
    </source>
</evidence>
<evidence type="ECO:0000255" key="4">
    <source>
        <dbReference type="PROSITE-ProRule" id="PRU00359"/>
    </source>
</evidence>
<evidence type="ECO:0000256" key="5">
    <source>
        <dbReference type="SAM" id="MobiDB-lite"/>
    </source>
</evidence>
<evidence type="ECO:0000303" key="6">
    <source>
    </source>
</evidence>
<evidence type="ECO:0000303" key="7">
    <source>
    </source>
</evidence>
<evidence type="ECO:0000305" key="8"/>
<evidence type="ECO:0007744" key="9">
    <source>
    </source>
</evidence>
<evidence type="ECO:0007744" key="10">
    <source>
    </source>
</evidence>
<evidence type="ECO:0007744" key="11">
    <source>
    </source>
</evidence>
<reference key="1">
    <citation type="journal article" date="2004" name="DNA Res.">
        <title>Prediction of the coding sequences of mouse homologues of KIAA gene: IV. The complete nucleotide sequences of 500 mouse KIAA-homologous cDNAs identified by screening of terminal sequences of cDNA clones randomly sampled from size-fractionated libraries.</title>
        <authorList>
            <person name="Okazaki N."/>
            <person name="Kikuno R."/>
            <person name="Ohara R."/>
            <person name="Inamoto S."/>
            <person name="Koseki H."/>
            <person name="Hiraoka S."/>
            <person name="Saga Y."/>
            <person name="Seino S."/>
            <person name="Nishimura M."/>
            <person name="Kaisho T."/>
            <person name="Hoshino K."/>
            <person name="Kitamura H."/>
            <person name="Nagase T."/>
            <person name="Ohara O."/>
            <person name="Koga H."/>
        </authorList>
    </citation>
    <scope>NUCLEOTIDE SEQUENCE [LARGE SCALE MRNA] (ISOFORM 2)</scope>
    <source>
        <tissue>Fetal brain</tissue>
    </source>
</reference>
<reference key="2">
    <citation type="journal article" date="2004" name="Genome Res.">
        <title>The status, quality, and expansion of the NIH full-length cDNA project: the Mammalian Gene Collection (MGC).</title>
        <authorList>
            <consortium name="The MGC Project Team"/>
        </authorList>
    </citation>
    <scope>NUCLEOTIDE SEQUENCE [LARGE SCALE MRNA] (ISOFORM 2)</scope>
    <source>
        <strain>C57BL/6J</strain>
        <tissue>Brain</tissue>
    </source>
</reference>
<reference key="3">
    <citation type="journal article" date="2005" name="Science">
        <title>The transcriptional landscape of the mammalian genome.</title>
        <authorList>
            <person name="Carninci P."/>
            <person name="Kasukawa T."/>
            <person name="Katayama S."/>
            <person name="Gough J."/>
            <person name="Frith M.C."/>
            <person name="Maeda N."/>
            <person name="Oyama R."/>
            <person name="Ravasi T."/>
            <person name="Lenhard B."/>
            <person name="Wells C."/>
            <person name="Kodzius R."/>
            <person name="Shimokawa K."/>
            <person name="Bajic V.B."/>
            <person name="Brenner S.E."/>
            <person name="Batalov S."/>
            <person name="Forrest A.R."/>
            <person name="Zavolan M."/>
            <person name="Davis M.J."/>
            <person name="Wilming L.G."/>
            <person name="Aidinis V."/>
            <person name="Allen J.E."/>
            <person name="Ambesi-Impiombato A."/>
            <person name="Apweiler R."/>
            <person name="Aturaliya R.N."/>
            <person name="Bailey T.L."/>
            <person name="Bansal M."/>
            <person name="Baxter L."/>
            <person name="Beisel K.W."/>
            <person name="Bersano T."/>
            <person name="Bono H."/>
            <person name="Chalk A.M."/>
            <person name="Chiu K.P."/>
            <person name="Choudhary V."/>
            <person name="Christoffels A."/>
            <person name="Clutterbuck D.R."/>
            <person name="Crowe M.L."/>
            <person name="Dalla E."/>
            <person name="Dalrymple B.P."/>
            <person name="de Bono B."/>
            <person name="Della Gatta G."/>
            <person name="di Bernardo D."/>
            <person name="Down T."/>
            <person name="Engstrom P."/>
            <person name="Fagiolini M."/>
            <person name="Faulkner G."/>
            <person name="Fletcher C.F."/>
            <person name="Fukushima T."/>
            <person name="Furuno M."/>
            <person name="Futaki S."/>
            <person name="Gariboldi M."/>
            <person name="Georgii-Hemming P."/>
            <person name="Gingeras T.R."/>
            <person name="Gojobori T."/>
            <person name="Green R.E."/>
            <person name="Gustincich S."/>
            <person name="Harbers M."/>
            <person name="Hayashi Y."/>
            <person name="Hensch T.K."/>
            <person name="Hirokawa N."/>
            <person name="Hill D."/>
            <person name="Huminiecki L."/>
            <person name="Iacono M."/>
            <person name="Ikeo K."/>
            <person name="Iwama A."/>
            <person name="Ishikawa T."/>
            <person name="Jakt M."/>
            <person name="Kanapin A."/>
            <person name="Katoh M."/>
            <person name="Kawasawa Y."/>
            <person name="Kelso J."/>
            <person name="Kitamura H."/>
            <person name="Kitano H."/>
            <person name="Kollias G."/>
            <person name="Krishnan S.P."/>
            <person name="Kruger A."/>
            <person name="Kummerfeld S.K."/>
            <person name="Kurochkin I.V."/>
            <person name="Lareau L.F."/>
            <person name="Lazarevic D."/>
            <person name="Lipovich L."/>
            <person name="Liu J."/>
            <person name="Liuni S."/>
            <person name="McWilliam S."/>
            <person name="Madan Babu M."/>
            <person name="Madera M."/>
            <person name="Marchionni L."/>
            <person name="Matsuda H."/>
            <person name="Matsuzawa S."/>
            <person name="Miki H."/>
            <person name="Mignone F."/>
            <person name="Miyake S."/>
            <person name="Morris K."/>
            <person name="Mottagui-Tabar S."/>
            <person name="Mulder N."/>
            <person name="Nakano N."/>
            <person name="Nakauchi H."/>
            <person name="Ng P."/>
            <person name="Nilsson R."/>
            <person name="Nishiguchi S."/>
            <person name="Nishikawa S."/>
            <person name="Nori F."/>
            <person name="Ohara O."/>
            <person name="Okazaki Y."/>
            <person name="Orlando V."/>
            <person name="Pang K.C."/>
            <person name="Pavan W.J."/>
            <person name="Pavesi G."/>
            <person name="Pesole G."/>
            <person name="Petrovsky N."/>
            <person name="Piazza S."/>
            <person name="Reed J."/>
            <person name="Reid J.F."/>
            <person name="Ring B.Z."/>
            <person name="Ringwald M."/>
            <person name="Rost B."/>
            <person name="Ruan Y."/>
            <person name="Salzberg S.L."/>
            <person name="Sandelin A."/>
            <person name="Schneider C."/>
            <person name="Schoenbach C."/>
            <person name="Sekiguchi K."/>
            <person name="Semple C.A."/>
            <person name="Seno S."/>
            <person name="Sessa L."/>
            <person name="Sheng Y."/>
            <person name="Shibata Y."/>
            <person name="Shimada H."/>
            <person name="Shimada K."/>
            <person name="Silva D."/>
            <person name="Sinclair B."/>
            <person name="Sperling S."/>
            <person name="Stupka E."/>
            <person name="Sugiura K."/>
            <person name="Sultana R."/>
            <person name="Takenaka Y."/>
            <person name="Taki K."/>
            <person name="Tammoja K."/>
            <person name="Tan S.L."/>
            <person name="Tang S."/>
            <person name="Taylor M.S."/>
            <person name="Tegner J."/>
            <person name="Teichmann S.A."/>
            <person name="Ueda H.R."/>
            <person name="van Nimwegen E."/>
            <person name="Verardo R."/>
            <person name="Wei C.L."/>
            <person name="Yagi K."/>
            <person name="Yamanishi H."/>
            <person name="Zabarovsky E."/>
            <person name="Zhu S."/>
            <person name="Zimmer A."/>
            <person name="Hide W."/>
            <person name="Bult C."/>
            <person name="Grimmond S.M."/>
            <person name="Teasdale R.D."/>
            <person name="Liu E.T."/>
            <person name="Brusic V."/>
            <person name="Quackenbush J."/>
            <person name="Wahlestedt C."/>
            <person name="Mattick J.S."/>
            <person name="Hume D.A."/>
            <person name="Kai C."/>
            <person name="Sasaki D."/>
            <person name="Tomaru Y."/>
            <person name="Fukuda S."/>
            <person name="Kanamori-Katayama M."/>
            <person name="Suzuki M."/>
            <person name="Aoki J."/>
            <person name="Arakawa T."/>
            <person name="Iida J."/>
            <person name="Imamura K."/>
            <person name="Itoh M."/>
            <person name="Kato T."/>
            <person name="Kawaji H."/>
            <person name="Kawagashira N."/>
            <person name="Kawashima T."/>
            <person name="Kojima M."/>
            <person name="Kondo S."/>
            <person name="Konno H."/>
            <person name="Nakano K."/>
            <person name="Ninomiya N."/>
            <person name="Nishio T."/>
            <person name="Okada M."/>
            <person name="Plessy C."/>
            <person name="Shibata K."/>
            <person name="Shiraki T."/>
            <person name="Suzuki S."/>
            <person name="Tagami M."/>
            <person name="Waki K."/>
            <person name="Watahiki A."/>
            <person name="Okamura-Oho Y."/>
            <person name="Suzuki H."/>
            <person name="Kawai J."/>
            <person name="Hayashizaki Y."/>
        </authorList>
    </citation>
    <scope>NUCLEOTIDE SEQUENCE [LARGE SCALE MRNA] OF 11-1107 (ISOFORM 1)</scope>
    <source>
        <strain>C57BL/6J</strain>
        <tissue>Urinary bladder</tissue>
    </source>
</reference>
<reference key="4">
    <citation type="journal article" date="2004" name="Mol. Cell. Proteomics">
        <title>Phosphoproteomic analysis of the developing mouse brain.</title>
        <authorList>
            <person name="Ballif B.A."/>
            <person name="Villen J."/>
            <person name="Beausoleil S.A."/>
            <person name="Schwartz D."/>
            <person name="Gygi S.P."/>
        </authorList>
    </citation>
    <scope>PHOSPHORYLATION [LARGE SCALE ANALYSIS] AT SER-597</scope>
    <scope>IDENTIFICATION BY MASS SPECTROMETRY [LARGE SCALE ANALYSIS]</scope>
    <source>
        <tissue>Embryonic brain</tissue>
    </source>
</reference>
<reference key="5">
    <citation type="journal article" date="2007" name="Mol. Cell. Proteomics">
        <title>Qualitative and quantitative analyses of protein phosphorylation in naive and stimulated mouse synaptosomal preparations.</title>
        <authorList>
            <person name="Munton R.P."/>
            <person name="Tweedie-Cullen R."/>
            <person name="Livingstone-Zatchej M."/>
            <person name="Weinandy F."/>
            <person name="Waidelich M."/>
            <person name="Longo D."/>
            <person name="Gehrig P."/>
            <person name="Potthast F."/>
            <person name="Rutishauser D."/>
            <person name="Gerrits B."/>
            <person name="Panse C."/>
            <person name="Schlapbach R."/>
            <person name="Mansuy I.M."/>
        </authorList>
    </citation>
    <scope>IDENTIFICATION BY MASS SPECTROMETRY [LARGE SCALE ANALYSIS]</scope>
    <source>
        <tissue>Brain cortex</tissue>
    </source>
</reference>
<reference key="6">
    <citation type="journal article" date="2009" name="Immunity">
        <title>The phagosomal proteome in interferon-gamma-activated macrophages.</title>
        <authorList>
            <person name="Trost M."/>
            <person name="English L."/>
            <person name="Lemieux S."/>
            <person name="Courcelles M."/>
            <person name="Desjardins M."/>
            <person name="Thibault P."/>
        </authorList>
    </citation>
    <scope>PHOSPHORYLATION [LARGE SCALE ANALYSIS] AT SER-597</scope>
    <scope>IDENTIFICATION BY MASS SPECTROMETRY [LARGE SCALE ANALYSIS]</scope>
</reference>
<reference key="7">
    <citation type="journal article" date="2010" name="Cell">
        <title>A tissue-specific atlas of mouse protein phosphorylation and expression.</title>
        <authorList>
            <person name="Huttlin E.L."/>
            <person name="Jedrychowski M.P."/>
            <person name="Elias J.E."/>
            <person name="Goswami T."/>
            <person name="Rad R."/>
            <person name="Beausoleil S.A."/>
            <person name="Villen J."/>
            <person name="Haas W."/>
            <person name="Sowa M.E."/>
            <person name="Gygi S.P."/>
        </authorList>
    </citation>
    <scope>PHOSPHORYLATION [LARGE SCALE ANALYSIS] AT SER-380; SER-597; SER-708 AND SER-719</scope>
    <scope>IDENTIFICATION BY MASS SPECTROMETRY [LARGE SCALE ANALYSIS]</scope>
    <source>
        <tissue>Brain</tissue>
        <tissue>Spleen</tissue>
        <tissue>Testis</tissue>
    </source>
</reference>
<keyword id="KW-0007">Acetylation</keyword>
<keyword id="KW-0025">Alternative splicing</keyword>
<keyword id="KW-0343">GTPase activation</keyword>
<keyword id="KW-0539">Nucleus</keyword>
<keyword id="KW-0597">Phosphoprotein</keyword>
<keyword id="KW-1185">Reference proteome</keyword>
<keyword id="KW-0677">Repeat</keyword>
<comment type="subcellular location">
    <subcellularLocation>
        <location evidence="8">Nucleus</location>
    </subcellularLocation>
</comment>
<comment type="alternative products">
    <event type="alternative splicing"/>
    <isoform>
        <id>P59281-1</id>
        <name>1</name>
        <sequence type="displayed"/>
    </isoform>
    <isoform>
        <id>P59281-2</id>
        <name>2</name>
        <sequence type="described" ref="VSP_013707"/>
    </isoform>
</comment>
<comment type="sequence caution" evidence="8">
    <conflict type="erroneous initiation">
        <sequence resource="EMBL-CDS" id="BAD32510"/>
    </conflict>
    <text>Extended N-terminus.</text>
</comment>